<evidence type="ECO:0000255" key="1">
    <source>
        <dbReference type="HAMAP-Rule" id="MF_00254"/>
    </source>
</evidence>
<keyword id="KW-0030">Aminoacyl-tRNA synthetase</keyword>
<keyword id="KW-0067">ATP-binding</keyword>
<keyword id="KW-0963">Cytoplasm</keyword>
<keyword id="KW-0436">Ligase</keyword>
<keyword id="KW-0547">Nucleotide-binding</keyword>
<keyword id="KW-0648">Protein biosynthesis</keyword>
<gene>
    <name evidence="1" type="primary">glyQ</name>
    <name type="ordered locus">RF_1347</name>
</gene>
<accession>Q4UJU1</accession>
<protein>
    <recommendedName>
        <fullName evidence="1">Glycine--tRNA ligase alpha subunit</fullName>
        <ecNumber evidence="1">6.1.1.14</ecNumber>
    </recommendedName>
    <alternativeName>
        <fullName evidence="1">Glycyl-tRNA synthetase alpha subunit</fullName>
        <shortName evidence="1">GlyRS</shortName>
    </alternativeName>
</protein>
<feature type="chain" id="PRO_0000274895" description="Glycine--tRNA ligase alpha subunit">
    <location>
        <begin position="1"/>
        <end position="289"/>
    </location>
</feature>
<proteinExistence type="inferred from homology"/>
<name>SYGA_RICFE</name>
<organism>
    <name type="scientific">Rickettsia felis (strain ATCC VR-1525 / URRWXCal2)</name>
    <name type="common">Rickettsia azadi</name>
    <dbReference type="NCBI Taxonomy" id="315456"/>
    <lineage>
        <taxon>Bacteria</taxon>
        <taxon>Pseudomonadati</taxon>
        <taxon>Pseudomonadota</taxon>
        <taxon>Alphaproteobacteria</taxon>
        <taxon>Rickettsiales</taxon>
        <taxon>Rickettsiaceae</taxon>
        <taxon>Rickettsieae</taxon>
        <taxon>Rickettsia</taxon>
        <taxon>spotted fever group</taxon>
    </lineage>
</organism>
<sequence length="289" mass="33083">MKKLSFQQIILALQNYWQDYGCAILQPYDAHVGAGTFHPATVLRCLGSKPWSVAYVQPSRRPGDSRYGMHPNRMQHYYQFQVILKPSPDNIQELYLKSLECLGIDLKKHDIRFVEDDWESPTLGAAGLGWEVWCNGMEVSQFTYMQQIGGIECRPVAGEITYGLERLALYIQGVDEVKELDWNGQIGEKALKYGEVDFEAERQFSKYNLELANSKMLLRHFKDSEEECKRLVDGDVPLAAYDECLKASHTFNQLNALGVISVTERASYILRVRHLAKICCMKWLELSGE</sequence>
<dbReference type="EC" id="6.1.1.14" evidence="1"/>
<dbReference type="EMBL" id="CP000053">
    <property type="protein sequence ID" value="AAY62198.1"/>
    <property type="molecule type" value="Genomic_DNA"/>
</dbReference>
<dbReference type="SMR" id="Q4UJU1"/>
<dbReference type="STRING" id="315456.RF_1347"/>
<dbReference type="KEGG" id="rfe:RF_1347"/>
<dbReference type="eggNOG" id="COG0752">
    <property type="taxonomic scope" value="Bacteria"/>
</dbReference>
<dbReference type="HOGENOM" id="CLU_057066_1_0_5"/>
<dbReference type="OrthoDB" id="9802183at2"/>
<dbReference type="Proteomes" id="UP000008548">
    <property type="component" value="Chromosome"/>
</dbReference>
<dbReference type="GO" id="GO:0005829">
    <property type="term" value="C:cytosol"/>
    <property type="evidence" value="ECO:0007669"/>
    <property type="project" value="TreeGrafter"/>
</dbReference>
<dbReference type="GO" id="GO:0005524">
    <property type="term" value="F:ATP binding"/>
    <property type="evidence" value="ECO:0007669"/>
    <property type="project" value="UniProtKB-UniRule"/>
</dbReference>
<dbReference type="GO" id="GO:0004820">
    <property type="term" value="F:glycine-tRNA ligase activity"/>
    <property type="evidence" value="ECO:0007669"/>
    <property type="project" value="UniProtKB-UniRule"/>
</dbReference>
<dbReference type="GO" id="GO:0006426">
    <property type="term" value="P:glycyl-tRNA aminoacylation"/>
    <property type="evidence" value="ECO:0007669"/>
    <property type="project" value="UniProtKB-UniRule"/>
</dbReference>
<dbReference type="FunFam" id="3.30.930.10:FF:000006">
    <property type="entry name" value="Glycine--tRNA ligase alpha subunit"/>
    <property type="match status" value="1"/>
</dbReference>
<dbReference type="Gene3D" id="3.30.930.10">
    <property type="entry name" value="Bira Bifunctional Protein, Domain 2"/>
    <property type="match status" value="1"/>
</dbReference>
<dbReference type="Gene3D" id="1.20.58.180">
    <property type="entry name" value="Class II aaRS and biotin synthetases, domain 2"/>
    <property type="match status" value="1"/>
</dbReference>
<dbReference type="HAMAP" id="MF_00254">
    <property type="entry name" value="Gly_tRNA_synth_alpha"/>
    <property type="match status" value="1"/>
</dbReference>
<dbReference type="InterPro" id="IPR045864">
    <property type="entry name" value="aa-tRNA-synth_II/BPL/LPL"/>
</dbReference>
<dbReference type="InterPro" id="IPR006194">
    <property type="entry name" value="Gly-tRNA-synth_heterodimer"/>
</dbReference>
<dbReference type="InterPro" id="IPR002310">
    <property type="entry name" value="Gly-tRNA_ligase_asu"/>
</dbReference>
<dbReference type="NCBIfam" id="TIGR00388">
    <property type="entry name" value="glyQ"/>
    <property type="match status" value="1"/>
</dbReference>
<dbReference type="NCBIfam" id="NF006827">
    <property type="entry name" value="PRK09348.1"/>
    <property type="match status" value="1"/>
</dbReference>
<dbReference type="PANTHER" id="PTHR30075:SF2">
    <property type="entry name" value="GLYCINE--TRNA LIGASE, CHLOROPLASTIC_MITOCHONDRIAL 2"/>
    <property type="match status" value="1"/>
</dbReference>
<dbReference type="PANTHER" id="PTHR30075">
    <property type="entry name" value="GLYCYL-TRNA SYNTHETASE"/>
    <property type="match status" value="1"/>
</dbReference>
<dbReference type="Pfam" id="PF02091">
    <property type="entry name" value="tRNA-synt_2e"/>
    <property type="match status" value="1"/>
</dbReference>
<dbReference type="PRINTS" id="PR01044">
    <property type="entry name" value="TRNASYNTHGA"/>
</dbReference>
<dbReference type="SUPFAM" id="SSF55681">
    <property type="entry name" value="Class II aaRS and biotin synthetases"/>
    <property type="match status" value="1"/>
</dbReference>
<dbReference type="PROSITE" id="PS50861">
    <property type="entry name" value="AA_TRNA_LIGASE_II_GLYAB"/>
    <property type="match status" value="1"/>
</dbReference>
<reference key="1">
    <citation type="journal article" date="2005" name="PLoS Biol.">
        <title>The genome sequence of Rickettsia felis identifies the first putative conjugative plasmid in an obligate intracellular parasite.</title>
        <authorList>
            <person name="Ogata H."/>
            <person name="Renesto P."/>
            <person name="Audic S."/>
            <person name="Robert C."/>
            <person name="Blanc G."/>
            <person name="Fournier P.-E."/>
            <person name="Parinello H."/>
            <person name="Claverie J.-M."/>
            <person name="Raoult D."/>
        </authorList>
    </citation>
    <scope>NUCLEOTIDE SEQUENCE [LARGE SCALE GENOMIC DNA]</scope>
    <source>
        <strain>ATCC VR-1525 / URRWXCal2</strain>
    </source>
</reference>
<comment type="catalytic activity">
    <reaction evidence="1">
        <text>tRNA(Gly) + glycine + ATP = glycyl-tRNA(Gly) + AMP + diphosphate</text>
        <dbReference type="Rhea" id="RHEA:16013"/>
        <dbReference type="Rhea" id="RHEA-COMP:9664"/>
        <dbReference type="Rhea" id="RHEA-COMP:9683"/>
        <dbReference type="ChEBI" id="CHEBI:30616"/>
        <dbReference type="ChEBI" id="CHEBI:33019"/>
        <dbReference type="ChEBI" id="CHEBI:57305"/>
        <dbReference type="ChEBI" id="CHEBI:78442"/>
        <dbReference type="ChEBI" id="CHEBI:78522"/>
        <dbReference type="ChEBI" id="CHEBI:456215"/>
        <dbReference type="EC" id="6.1.1.14"/>
    </reaction>
</comment>
<comment type="subunit">
    <text evidence="1">Tetramer of two alpha and two beta subunits.</text>
</comment>
<comment type="subcellular location">
    <subcellularLocation>
        <location evidence="1">Cytoplasm</location>
    </subcellularLocation>
</comment>
<comment type="similarity">
    <text evidence="1">Belongs to the class-II aminoacyl-tRNA synthetase family.</text>
</comment>